<gene>
    <name evidence="1" type="primary">thrS</name>
    <name type="ordered locus">SG1419</name>
</gene>
<proteinExistence type="inferred from homology"/>
<feature type="chain" id="PRO_1000020517" description="Threonine--tRNA ligase">
    <location>
        <begin position="1"/>
        <end position="642"/>
    </location>
</feature>
<feature type="domain" description="TGS" evidence="2">
    <location>
        <begin position="1"/>
        <end position="61"/>
    </location>
</feature>
<feature type="region of interest" description="Catalytic" evidence="1">
    <location>
        <begin position="243"/>
        <end position="534"/>
    </location>
</feature>
<feature type="binding site" evidence="1">
    <location>
        <position position="334"/>
    </location>
    <ligand>
        <name>Zn(2+)</name>
        <dbReference type="ChEBI" id="CHEBI:29105"/>
    </ligand>
</feature>
<feature type="binding site" evidence="1">
    <location>
        <position position="385"/>
    </location>
    <ligand>
        <name>Zn(2+)</name>
        <dbReference type="ChEBI" id="CHEBI:29105"/>
    </ligand>
</feature>
<feature type="binding site" evidence="1">
    <location>
        <position position="511"/>
    </location>
    <ligand>
        <name>Zn(2+)</name>
        <dbReference type="ChEBI" id="CHEBI:29105"/>
    </ligand>
</feature>
<accession>Q2NT31</accession>
<evidence type="ECO:0000255" key="1">
    <source>
        <dbReference type="HAMAP-Rule" id="MF_00184"/>
    </source>
</evidence>
<evidence type="ECO:0000255" key="2">
    <source>
        <dbReference type="PROSITE-ProRule" id="PRU01228"/>
    </source>
</evidence>
<sequence>MPVITLPDGSQRQFAHPVSPLDVARDIGPGLAKACIAGRVNGKLVDAVDVIEHDAQIAIITAKDEAGLEIIRHSCAHLLGHAIKQLWPQTKMAIGPVIDKGFYYDLDLDHTLTQDDLDLLEKRMHELAEKDYDVIKEKVSWQQARDAFVARGEDYKVAILDENIRRDDRPGLYHHEEYVDMCRGPHVPNMRFCHHFTLQKTSGAYWRGDSKNKMLLRIYGTAWGDKKQLNTYLQHLEEAAKRDHRKIGKQLDLYHMQEEAPGMVFWHNDGWTLFRELETFVRMKLKAYQYQEVKGPFMMDRVLWEKTGHWDNYAEHMFTTSSENREYCIKPMNCPGHVQIFNQGLKSYRDLPLRMAEFGSCHRNEPSGSLHGLMRVRGFTQDDAHIFCTEDQVRDEVNNCIKMVYDMYGTFGFEKILVKLSTRPEKRIGSNDVWGRAEQDLAAALTENGIAFEYQPGEGAFYGPKIEFTLLDCLDRAWQCGTVQLDFSLPGRLNASYVGENNERVVPVMIHRAILGSMERFIGILTEEYAGFYPTWLVPTQVVVMNITDNQSEYVAKLTEKLSAAGIRVKADLRNEKIGFKIREHTLRRVPYMLVCGDKEVEACKVAVRTRRGKDLGSIDVNEIITKLQHEIRSRNLHQLEE</sequence>
<dbReference type="EC" id="6.1.1.3" evidence="1"/>
<dbReference type="EMBL" id="AP008232">
    <property type="protein sequence ID" value="BAE74694.1"/>
    <property type="molecule type" value="Genomic_DNA"/>
</dbReference>
<dbReference type="RefSeq" id="WP_011411239.1">
    <property type="nucleotide sequence ID" value="NC_007712.1"/>
</dbReference>
<dbReference type="SMR" id="Q2NT31"/>
<dbReference type="STRING" id="343509.SG1419"/>
<dbReference type="KEGG" id="sgl:SG1419"/>
<dbReference type="eggNOG" id="COG0441">
    <property type="taxonomic scope" value="Bacteria"/>
</dbReference>
<dbReference type="HOGENOM" id="CLU_008554_0_1_6"/>
<dbReference type="OrthoDB" id="9802304at2"/>
<dbReference type="Proteomes" id="UP000001932">
    <property type="component" value="Chromosome"/>
</dbReference>
<dbReference type="GO" id="GO:0005829">
    <property type="term" value="C:cytosol"/>
    <property type="evidence" value="ECO:0007669"/>
    <property type="project" value="TreeGrafter"/>
</dbReference>
<dbReference type="GO" id="GO:0005524">
    <property type="term" value="F:ATP binding"/>
    <property type="evidence" value="ECO:0007669"/>
    <property type="project" value="UniProtKB-UniRule"/>
</dbReference>
<dbReference type="GO" id="GO:0046872">
    <property type="term" value="F:metal ion binding"/>
    <property type="evidence" value="ECO:0007669"/>
    <property type="project" value="UniProtKB-KW"/>
</dbReference>
<dbReference type="GO" id="GO:0004829">
    <property type="term" value="F:threonine-tRNA ligase activity"/>
    <property type="evidence" value="ECO:0007669"/>
    <property type="project" value="UniProtKB-UniRule"/>
</dbReference>
<dbReference type="GO" id="GO:0000049">
    <property type="term" value="F:tRNA binding"/>
    <property type="evidence" value="ECO:0007669"/>
    <property type="project" value="UniProtKB-KW"/>
</dbReference>
<dbReference type="GO" id="GO:0006435">
    <property type="term" value="P:threonyl-tRNA aminoacylation"/>
    <property type="evidence" value="ECO:0007669"/>
    <property type="project" value="UniProtKB-UniRule"/>
</dbReference>
<dbReference type="CDD" id="cd01667">
    <property type="entry name" value="TGS_ThrRS"/>
    <property type="match status" value="1"/>
</dbReference>
<dbReference type="CDD" id="cd00860">
    <property type="entry name" value="ThrRS_anticodon"/>
    <property type="match status" value="1"/>
</dbReference>
<dbReference type="CDD" id="cd00771">
    <property type="entry name" value="ThrRS_core"/>
    <property type="match status" value="1"/>
</dbReference>
<dbReference type="FunFam" id="3.10.20.30:FF:000005">
    <property type="entry name" value="Threonine--tRNA ligase"/>
    <property type="match status" value="1"/>
</dbReference>
<dbReference type="FunFam" id="3.30.54.20:FF:000002">
    <property type="entry name" value="Threonine--tRNA ligase"/>
    <property type="match status" value="1"/>
</dbReference>
<dbReference type="FunFam" id="3.30.930.10:FF:000002">
    <property type="entry name" value="Threonine--tRNA ligase"/>
    <property type="match status" value="1"/>
</dbReference>
<dbReference type="FunFam" id="3.40.50.800:FF:000001">
    <property type="entry name" value="Threonine--tRNA ligase"/>
    <property type="match status" value="1"/>
</dbReference>
<dbReference type="FunFam" id="3.30.980.10:FF:000005">
    <property type="entry name" value="Threonyl-tRNA synthetase, mitochondrial"/>
    <property type="match status" value="1"/>
</dbReference>
<dbReference type="Gene3D" id="3.10.20.30">
    <property type="match status" value="1"/>
</dbReference>
<dbReference type="Gene3D" id="3.30.54.20">
    <property type="match status" value="1"/>
</dbReference>
<dbReference type="Gene3D" id="3.40.50.800">
    <property type="entry name" value="Anticodon-binding domain"/>
    <property type="match status" value="1"/>
</dbReference>
<dbReference type="Gene3D" id="3.30.930.10">
    <property type="entry name" value="Bira Bifunctional Protein, Domain 2"/>
    <property type="match status" value="1"/>
</dbReference>
<dbReference type="Gene3D" id="3.30.980.10">
    <property type="entry name" value="Threonyl-trna Synthetase, Chain A, domain 2"/>
    <property type="match status" value="1"/>
</dbReference>
<dbReference type="HAMAP" id="MF_00184">
    <property type="entry name" value="Thr_tRNA_synth"/>
    <property type="match status" value="1"/>
</dbReference>
<dbReference type="InterPro" id="IPR002314">
    <property type="entry name" value="aa-tRNA-synt_IIb"/>
</dbReference>
<dbReference type="InterPro" id="IPR006195">
    <property type="entry name" value="aa-tRNA-synth_II"/>
</dbReference>
<dbReference type="InterPro" id="IPR045864">
    <property type="entry name" value="aa-tRNA-synth_II/BPL/LPL"/>
</dbReference>
<dbReference type="InterPro" id="IPR004154">
    <property type="entry name" value="Anticodon-bd"/>
</dbReference>
<dbReference type="InterPro" id="IPR036621">
    <property type="entry name" value="Anticodon-bd_dom_sf"/>
</dbReference>
<dbReference type="InterPro" id="IPR012675">
    <property type="entry name" value="Beta-grasp_dom_sf"/>
</dbReference>
<dbReference type="InterPro" id="IPR004095">
    <property type="entry name" value="TGS"/>
</dbReference>
<dbReference type="InterPro" id="IPR012676">
    <property type="entry name" value="TGS-like"/>
</dbReference>
<dbReference type="InterPro" id="IPR002320">
    <property type="entry name" value="Thr-tRNA-ligase_IIa"/>
</dbReference>
<dbReference type="InterPro" id="IPR018163">
    <property type="entry name" value="Thr/Ala-tRNA-synth_IIc_edit"/>
</dbReference>
<dbReference type="InterPro" id="IPR047246">
    <property type="entry name" value="ThrRS_anticodon"/>
</dbReference>
<dbReference type="InterPro" id="IPR033728">
    <property type="entry name" value="ThrRS_core"/>
</dbReference>
<dbReference type="InterPro" id="IPR012947">
    <property type="entry name" value="tRNA_SAD"/>
</dbReference>
<dbReference type="NCBIfam" id="TIGR00418">
    <property type="entry name" value="thrS"/>
    <property type="match status" value="1"/>
</dbReference>
<dbReference type="PANTHER" id="PTHR11451:SF44">
    <property type="entry name" value="THREONINE--TRNA LIGASE, CHLOROPLASTIC_MITOCHONDRIAL 2"/>
    <property type="match status" value="1"/>
</dbReference>
<dbReference type="PANTHER" id="PTHR11451">
    <property type="entry name" value="THREONINE-TRNA LIGASE"/>
    <property type="match status" value="1"/>
</dbReference>
<dbReference type="Pfam" id="PF03129">
    <property type="entry name" value="HGTP_anticodon"/>
    <property type="match status" value="1"/>
</dbReference>
<dbReference type="Pfam" id="PF02824">
    <property type="entry name" value="TGS"/>
    <property type="match status" value="1"/>
</dbReference>
<dbReference type="Pfam" id="PF00587">
    <property type="entry name" value="tRNA-synt_2b"/>
    <property type="match status" value="1"/>
</dbReference>
<dbReference type="Pfam" id="PF07973">
    <property type="entry name" value="tRNA_SAD"/>
    <property type="match status" value="1"/>
</dbReference>
<dbReference type="PRINTS" id="PR01047">
    <property type="entry name" value="TRNASYNTHTHR"/>
</dbReference>
<dbReference type="SMART" id="SM00863">
    <property type="entry name" value="tRNA_SAD"/>
    <property type="match status" value="1"/>
</dbReference>
<dbReference type="SUPFAM" id="SSF52954">
    <property type="entry name" value="Class II aaRS ABD-related"/>
    <property type="match status" value="1"/>
</dbReference>
<dbReference type="SUPFAM" id="SSF55681">
    <property type="entry name" value="Class II aaRS and biotin synthetases"/>
    <property type="match status" value="1"/>
</dbReference>
<dbReference type="SUPFAM" id="SSF81271">
    <property type="entry name" value="TGS-like"/>
    <property type="match status" value="1"/>
</dbReference>
<dbReference type="SUPFAM" id="SSF55186">
    <property type="entry name" value="ThrRS/AlaRS common domain"/>
    <property type="match status" value="1"/>
</dbReference>
<dbReference type="PROSITE" id="PS50862">
    <property type="entry name" value="AA_TRNA_LIGASE_II"/>
    <property type="match status" value="1"/>
</dbReference>
<dbReference type="PROSITE" id="PS51880">
    <property type="entry name" value="TGS"/>
    <property type="match status" value="1"/>
</dbReference>
<keyword id="KW-0030">Aminoacyl-tRNA synthetase</keyword>
<keyword id="KW-0067">ATP-binding</keyword>
<keyword id="KW-0963">Cytoplasm</keyword>
<keyword id="KW-0436">Ligase</keyword>
<keyword id="KW-0479">Metal-binding</keyword>
<keyword id="KW-0547">Nucleotide-binding</keyword>
<keyword id="KW-0648">Protein biosynthesis</keyword>
<keyword id="KW-0694">RNA-binding</keyword>
<keyword id="KW-0820">tRNA-binding</keyword>
<keyword id="KW-0862">Zinc</keyword>
<comment type="function">
    <text evidence="1">Catalyzes the attachment of threonine to tRNA(Thr) in a two-step reaction: L-threonine is first activated by ATP to form Thr-AMP and then transferred to the acceptor end of tRNA(Thr). Also edits incorrectly charged L-seryl-tRNA(Thr).</text>
</comment>
<comment type="catalytic activity">
    <reaction evidence="1">
        <text>tRNA(Thr) + L-threonine + ATP = L-threonyl-tRNA(Thr) + AMP + diphosphate + H(+)</text>
        <dbReference type="Rhea" id="RHEA:24624"/>
        <dbReference type="Rhea" id="RHEA-COMP:9670"/>
        <dbReference type="Rhea" id="RHEA-COMP:9704"/>
        <dbReference type="ChEBI" id="CHEBI:15378"/>
        <dbReference type="ChEBI" id="CHEBI:30616"/>
        <dbReference type="ChEBI" id="CHEBI:33019"/>
        <dbReference type="ChEBI" id="CHEBI:57926"/>
        <dbReference type="ChEBI" id="CHEBI:78442"/>
        <dbReference type="ChEBI" id="CHEBI:78534"/>
        <dbReference type="ChEBI" id="CHEBI:456215"/>
        <dbReference type="EC" id="6.1.1.3"/>
    </reaction>
</comment>
<comment type="cofactor">
    <cofactor evidence="1">
        <name>Zn(2+)</name>
        <dbReference type="ChEBI" id="CHEBI:29105"/>
    </cofactor>
    <text evidence="1">Binds 1 zinc ion per subunit.</text>
</comment>
<comment type="subunit">
    <text evidence="1">Homodimer.</text>
</comment>
<comment type="subcellular location">
    <subcellularLocation>
        <location evidence="1">Cytoplasm</location>
    </subcellularLocation>
</comment>
<comment type="similarity">
    <text evidence="1">Belongs to the class-II aminoacyl-tRNA synthetase family.</text>
</comment>
<reference key="1">
    <citation type="journal article" date="2006" name="Genome Res.">
        <title>Massive genome erosion and functional adaptations provide insights into the symbiotic lifestyle of Sodalis glossinidius in the tsetse host.</title>
        <authorList>
            <person name="Toh H."/>
            <person name="Weiss B.L."/>
            <person name="Perkin S.A.H."/>
            <person name="Yamashita A."/>
            <person name="Oshima K."/>
            <person name="Hattori M."/>
            <person name="Aksoy S."/>
        </authorList>
    </citation>
    <scope>NUCLEOTIDE SEQUENCE [LARGE SCALE GENOMIC DNA]</scope>
    <source>
        <strain>morsitans</strain>
    </source>
</reference>
<organism>
    <name type="scientific">Sodalis glossinidius (strain morsitans)</name>
    <dbReference type="NCBI Taxonomy" id="343509"/>
    <lineage>
        <taxon>Bacteria</taxon>
        <taxon>Pseudomonadati</taxon>
        <taxon>Pseudomonadota</taxon>
        <taxon>Gammaproteobacteria</taxon>
        <taxon>Enterobacterales</taxon>
        <taxon>Bruguierivoracaceae</taxon>
        <taxon>Sodalis</taxon>
    </lineage>
</organism>
<protein>
    <recommendedName>
        <fullName evidence="1">Threonine--tRNA ligase</fullName>
        <ecNumber evidence="1">6.1.1.3</ecNumber>
    </recommendedName>
    <alternativeName>
        <fullName evidence="1">Threonyl-tRNA synthetase</fullName>
        <shortName evidence="1">ThrRS</shortName>
    </alternativeName>
</protein>
<name>SYT_SODGM</name>